<protein>
    <recommendedName>
        <fullName>7-cyano-7-deazaguanine synthase</fullName>
        <ecNumber>6.3.4.20</ecNumber>
    </recommendedName>
    <alternativeName>
        <fullName>7-cyano-7-carbaguanine synthase</fullName>
    </alternativeName>
    <alternativeName>
        <fullName>Archaeosine biosynthesis protein QueC</fullName>
    </alternativeName>
    <alternativeName>
        <fullName>PreQ(0) synthase</fullName>
    </alternativeName>
</protein>
<evidence type="ECO:0000250" key="1"/>
<evidence type="ECO:0000305" key="2"/>
<dbReference type="EC" id="6.3.4.20"/>
<dbReference type="EMBL" id="AM774418">
    <property type="protein sequence ID" value="CAP15546.1"/>
    <property type="molecule type" value="Genomic_DNA"/>
</dbReference>
<dbReference type="RefSeq" id="WP_010904151.1">
    <property type="nucleotide sequence ID" value="NC_010368.1"/>
</dbReference>
<dbReference type="SMR" id="B0R9W5"/>
<dbReference type="EnsemblBacteria" id="CAP15546">
    <property type="protein sequence ID" value="CAP15546"/>
    <property type="gene ID" value="OE_5195R"/>
</dbReference>
<dbReference type="GeneID" id="68695242"/>
<dbReference type="KEGG" id="hsl:OE_5195R"/>
<dbReference type="HOGENOM" id="CLU_081854_1_0_2"/>
<dbReference type="PhylomeDB" id="B0R9W5"/>
<dbReference type="UniPathway" id="UPA00391"/>
<dbReference type="Proteomes" id="UP000001321">
    <property type="component" value="Plasmid PHS3"/>
</dbReference>
<dbReference type="GO" id="GO:0005524">
    <property type="term" value="F:ATP binding"/>
    <property type="evidence" value="ECO:0007669"/>
    <property type="project" value="UniProtKB-UniRule"/>
</dbReference>
<dbReference type="GO" id="GO:0016879">
    <property type="term" value="F:ligase activity, forming carbon-nitrogen bonds"/>
    <property type="evidence" value="ECO:0007669"/>
    <property type="project" value="UniProtKB-UniRule"/>
</dbReference>
<dbReference type="GO" id="GO:0008270">
    <property type="term" value="F:zinc ion binding"/>
    <property type="evidence" value="ECO:0007669"/>
    <property type="project" value="UniProtKB-UniRule"/>
</dbReference>
<dbReference type="CDD" id="cd01995">
    <property type="entry name" value="QueC-like"/>
    <property type="match status" value="1"/>
</dbReference>
<dbReference type="Gene3D" id="3.40.50.620">
    <property type="entry name" value="HUPs"/>
    <property type="match status" value="1"/>
</dbReference>
<dbReference type="HAMAP" id="MF_01633">
    <property type="entry name" value="QueC"/>
    <property type="match status" value="1"/>
</dbReference>
<dbReference type="InterPro" id="IPR018317">
    <property type="entry name" value="QueC"/>
</dbReference>
<dbReference type="InterPro" id="IPR001763">
    <property type="entry name" value="Rhodanese-like_dom"/>
</dbReference>
<dbReference type="InterPro" id="IPR014729">
    <property type="entry name" value="Rossmann-like_a/b/a_fold"/>
</dbReference>
<dbReference type="NCBIfam" id="TIGR00364">
    <property type="entry name" value="7-cyano-7-deazaguanine synthase QueC"/>
    <property type="match status" value="1"/>
</dbReference>
<dbReference type="PANTHER" id="PTHR42914">
    <property type="entry name" value="7-CYANO-7-DEAZAGUANINE SYNTHASE"/>
    <property type="match status" value="1"/>
</dbReference>
<dbReference type="PANTHER" id="PTHR42914:SF1">
    <property type="entry name" value="7-CYANO-7-DEAZAGUANINE SYNTHASE"/>
    <property type="match status" value="1"/>
</dbReference>
<dbReference type="Pfam" id="PF06508">
    <property type="entry name" value="QueC"/>
    <property type="match status" value="1"/>
</dbReference>
<dbReference type="PIRSF" id="PIRSF006293">
    <property type="entry name" value="ExsB"/>
    <property type="match status" value="1"/>
</dbReference>
<dbReference type="SUPFAM" id="SSF52402">
    <property type="entry name" value="Adenine nucleotide alpha hydrolases-like"/>
    <property type="match status" value="1"/>
</dbReference>
<proteinExistence type="inferred from homology"/>
<comment type="function">
    <text evidence="1">Catalyzes the ATP-dependent conversion of 7-carboxy-7-deazaguanine (CDG) to 7-cyano-7-deazaguanine (preQ(0)).</text>
</comment>
<comment type="catalytic activity">
    <reaction>
        <text>7-carboxy-7-deazaguanine + NH4(+) + ATP = 7-cyano-7-deazaguanine + ADP + phosphate + H2O + H(+)</text>
        <dbReference type="Rhea" id="RHEA:27982"/>
        <dbReference type="ChEBI" id="CHEBI:15377"/>
        <dbReference type="ChEBI" id="CHEBI:15378"/>
        <dbReference type="ChEBI" id="CHEBI:28938"/>
        <dbReference type="ChEBI" id="CHEBI:30616"/>
        <dbReference type="ChEBI" id="CHEBI:43474"/>
        <dbReference type="ChEBI" id="CHEBI:45075"/>
        <dbReference type="ChEBI" id="CHEBI:61036"/>
        <dbReference type="ChEBI" id="CHEBI:456216"/>
        <dbReference type="EC" id="6.3.4.20"/>
    </reaction>
</comment>
<comment type="cofactor">
    <cofactor evidence="1">
        <name>Zn(2+)</name>
        <dbReference type="ChEBI" id="CHEBI:29105"/>
    </cofactor>
    <text evidence="1">Binds 1 zinc ion per subunit.</text>
</comment>
<comment type="pathway">
    <text>Purine metabolism; 7-cyano-7-deazaguanine biosynthesis.</text>
</comment>
<comment type="similarity">
    <text evidence="2">Belongs to the QueC family.</text>
</comment>
<feature type="chain" id="PRO_0000408955" description="7-cyano-7-deazaguanine synthase">
    <location>
        <begin position="1"/>
        <end position="229"/>
    </location>
</feature>
<feature type="binding site" evidence="1">
    <location>
        <begin position="10"/>
        <end position="20"/>
    </location>
    <ligand>
        <name>ATP</name>
        <dbReference type="ChEBI" id="CHEBI:30616"/>
    </ligand>
</feature>
<feature type="binding site" evidence="1">
    <location>
        <position position="190"/>
    </location>
    <ligand>
        <name>Zn(2+)</name>
        <dbReference type="ChEBI" id="CHEBI:29105"/>
    </ligand>
</feature>
<feature type="binding site" evidence="1">
    <location>
        <position position="198"/>
    </location>
    <ligand>
        <name>Zn(2+)</name>
        <dbReference type="ChEBI" id="CHEBI:29105"/>
    </ligand>
</feature>
<feature type="binding site" evidence="1">
    <location>
        <position position="201"/>
    </location>
    <ligand>
        <name>Zn(2+)</name>
        <dbReference type="ChEBI" id="CHEBI:29105"/>
    </ligand>
</feature>
<feature type="binding site" evidence="1">
    <location>
        <position position="204"/>
    </location>
    <ligand>
        <name>Zn(2+)</name>
        <dbReference type="ChEBI" id="CHEBI:29105"/>
    </ligand>
</feature>
<geneLocation type="plasmid">
    <name>PHS3</name>
</geneLocation>
<reference key="1">
    <citation type="journal article" date="2008" name="Genomics">
        <title>Evolution in the laboratory: the genome of Halobacterium salinarum strain R1 compared to that of strain NRC-1.</title>
        <authorList>
            <person name="Pfeiffer F."/>
            <person name="Schuster S.C."/>
            <person name="Broicher A."/>
            <person name="Falb M."/>
            <person name="Palm P."/>
            <person name="Rodewald K."/>
            <person name="Ruepp A."/>
            <person name="Soppa J."/>
            <person name="Tittor J."/>
            <person name="Oesterhelt D."/>
        </authorList>
    </citation>
    <scope>NUCLEOTIDE SEQUENCE [LARGE SCALE GENOMIC DNA]</scope>
    <source>
        <strain>ATCC 29341 / DSM 671 / R1</strain>
    </source>
</reference>
<keyword id="KW-0067">ATP-binding</keyword>
<keyword id="KW-0436">Ligase</keyword>
<keyword id="KW-0479">Metal-binding</keyword>
<keyword id="KW-0547">Nucleotide-binding</keyword>
<keyword id="KW-0614">Plasmid</keyword>
<keyword id="KW-0862">Zinc</keyword>
<accession>B0R9W5</accession>
<name>QUEC_HALS3</name>
<sequence>MSAKRAVVLASGGMDSATAAAVAHNAGYEVYMLHTSYGQQTEHKEHECATAQAAALGAADFLHLTTDHLSKIGASSLTDDEMAVADADMESDEIPTSYVPFRNANLLAMATSYAEANDCEAVFIGAHSEDFSGYPDCQPAFFEAFQQTVAAGTKPDTEISINAPFVDWSKTDIAERGLELGVPYEHTWSCYRAEAPACGTCDACAFRLQAFQNLGERDPIEYAERPSYT</sequence>
<organism>
    <name type="scientific">Halobacterium salinarum (strain ATCC 29341 / DSM 671 / R1)</name>
    <dbReference type="NCBI Taxonomy" id="478009"/>
    <lineage>
        <taxon>Archaea</taxon>
        <taxon>Methanobacteriati</taxon>
        <taxon>Methanobacteriota</taxon>
        <taxon>Stenosarchaea group</taxon>
        <taxon>Halobacteria</taxon>
        <taxon>Halobacteriales</taxon>
        <taxon>Halobacteriaceae</taxon>
        <taxon>Halobacterium</taxon>
        <taxon>Halobacterium salinarum NRC-34001</taxon>
    </lineage>
</organism>
<gene>
    <name type="primary">queC</name>
    <name type="ordered locus">OE_5195R</name>
</gene>